<feature type="chain" id="PRO_0000282216" description="UPF0060 membrane protein Csal_2746">
    <location>
        <begin position="1"/>
        <end position="106"/>
    </location>
</feature>
<feature type="transmembrane region" description="Helical" evidence="1">
    <location>
        <begin position="6"/>
        <end position="26"/>
    </location>
</feature>
<feature type="transmembrane region" description="Helical" evidence="1">
    <location>
        <begin position="31"/>
        <end position="51"/>
    </location>
</feature>
<feature type="transmembrane region" description="Helical" evidence="1">
    <location>
        <begin position="59"/>
        <end position="79"/>
    </location>
</feature>
<feature type="transmembrane region" description="Helical" evidence="1">
    <location>
        <begin position="85"/>
        <end position="105"/>
    </location>
</feature>
<organism>
    <name type="scientific">Chromohalobacter salexigens (strain ATCC BAA-138 / DSM 3043 / CIP 106854 / NCIMB 13768 / 1H11)</name>
    <dbReference type="NCBI Taxonomy" id="290398"/>
    <lineage>
        <taxon>Bacteria</taxon>
        <taxon>Pseudomonadati</taxon>
        <taxon>Pseudomonadota</taxon>
        <taxon>Gammaproteobacteria</taxon>
        <taxon>Oceanospirillales</taxon>
        <taxon>Halomonadaceae</taxon>
        <taxon>Chromohalobacter</taxon>
    </lineage>
</organism>
<comment type="subcellular location">
    <subcellularLocation>
        <location evidence="1">Cell inner membrane</location>
        <topology evidence="1">Multi-pass membrane protein</topology>
    </subcellularLocation>
</comment>
<comment type="similarity">
    <text evidence="1">Belongs to the UPF0060 family.</text>
</comment>
<keyword id="KW-0997">Cell inner membrane</keyword>
<keyword id="KW-1003">Cell membrane</keyword>
<keyword id="KW-0472">Membrane</keyword>
<keyword id="KW-1185">Reference proteome</keyword>
<keyword id="KW-0812">Transmembrane</keyword>
<keyword id="KW-1133">Transmembrane helix</keyword>
<accession>Q1QTW5</accession>
<sequence>MLTTTLLFIATAMAEIIGCYLPWLWLRQQGSPWLLVPAAASLTLFVWLLSLHPAASGRVYAAYGGVYVVCALVWLWGVDGEALRPTDWIGAALALTGMGVIASGWR</sequence>
<name>Y2746_CHRSD</name>
<evidence type="ECO:0000255" key="1">
    <source>
        <dbReference type="HAMAP-Rule" id="MF_00010"/>
    </source>
</evidence>
<dbReference type="EMBL" id="CP000285">
    <property type="protein sequence ID" value="ABE60093.1"/>
    <property type="molecule type" value="Genomic_DNA"/>
</dbReference>
<dbReference type="RefSeq" id="WP_011508039.1">
    <property type="nucleotide sequence ID" value="NC_007963.1"/>
</dbReference>
<dbReference type="STRING" id="290398.Csal_2746"/>
<dbReference type="GeneID" id="95335444"/>
<dbReference type="KEGG" id="csa:Csal_2746"/>
<dbReference type="eggNOG" id="COG1742">
    <property type="taxonomic scope" value="Bacteria"/>
</dbReference>
<dbReference type="HOGENOM" id="CLU_117653_2_1_6"/>
<dbReference type="OrthoDB" id="123240at2"/>
<dbReference type="Proteomes" id="UP000000239">
    <property type="component" value="Chromosome"/>
</dbReference>
<dbReference type="GO" id="GO:0005886">
    <property type="term" value="C:plasma membrane"/>
    <property type="evidence" value="ECO:0007669"/>
    <property type="project" value="UniProtKB-SubCell"/>
</dbReference>
<dbReference type="HAMAP" id="MF_00010">
    <property type="entry name" value="UPF0060"/>
    <property type="match status" value="1"/>
</dbReference>
<dbReference type="InterPro" id="IPR003844">
    <property type="entry name" value="UPF0060"/>
</dbReference>
<dbReference type="NCBIfam" id="NF002586">
    <property type="entry name" value="PRK02237.1"/>
    <property type="match status" value="1"/>
</dbReference>
<dbReference type="PANTHER" id="PTHR36116">
    <property type="entry name" value="UPF0060 MEMBRANE PROTEIN YNFA"/>
    <property type="match status" value="1"/>
</dbReference>
<dbReference type="PANTHER" id="PTHR36116:SF1">
    <property type="entry name" value="UPF0060 MEMBRANE PROTEIN YNFA"/>
    <property type="match status" value="1"/>
</dbReference>
<dbReference type="Pfam" id="PF02694">
    <property type="entry name" value="UPF0060"/>
    <property type="match status" value="1"/>
</dbReference>
<dbReference type="SUPFAM" id="SSF103481">
    <property type="entry name" value="Multidrug resistance efflux transporter EmrE"/>
    <property type="match status" value="1"/>
</dbReference>
<reference key="1">
    <citation type="journal article" date="2011" name="Stand. Genomic Sci.">
        <title>Complete genome sequence of the halophilic and highly halotolerant Chromohalobacter salexigens type strain (1H11(T)).</title>
        <authorList>
            <person name="Copeland A."/>
            <person name="O'Connor K."/>
            <person name="Lucas S."/>
            <person name="Lapidus A."/>
            <person name="Berry K.W."/>
            <person name="Detter J.C."/>
            <person name="Del Rio T.G."/>
            <person name="Hammon N."/>
            <person name="Dalin E."/>
            <person name="Tice H."/>
            <person name="Pitluck S."/>
            <person name="Bruce D."/>
            <person name="Goodwin L."/>
            <person name="Han C."/>
            <person name="Tapia R."/>
            <person name="Saunders E."/>
            <person name="Schmutz J."/>
            <person name="Brettin T."/>
            <person name="Larimer F."/>
            <person name="Land M."/>
            <person name="Hauser L."/>
            <person name="Vargas C."/>
            <person name="Nieto J.J."/>
            <person name="Kyrpides N.C."/>
            <person name="Ivanova N."/>
            <person name="Goker M."/>
            <person name="Klenk H.P."/>
            <person name="Csonka L.N."/>
            <person name="Woyke T."/>
        </authorList>
    </citation>
    <scope>NUCLEOTIDE SEQUENCE [LARGE SCALE GENOMIC DNA]</scope>
    <source>
        <strain>ATCC BAA-138 / DSM 3043 / CIP 106854 / NCIMB 13768 / 1H11</strain>
    </source>
</reference>
<protein>
    <recommendedName>
        <fullName evidence="1">UPF0060 membrane protein Csal_2746</fullName>
    </recommendedName>
</protein>
<proteinExistence type="inferred from homology"/>
<gene>
    <name type="ordered locus">Csal_2746</name>
</gene>